<gene>
    <name type="primary">fusA</name>
    <name type="synonym">fus</name>
    <name type="ordered locus">UU523</name>
</gene>
<accession>Q9PPW7</accession>
<proteinExistence type="inferred from homology"/>
<comment type="function">
    <text evidence="1">Catalyzes the GTP-dependent ribosomal translocation step during translation elongation. During this step, the ribosome changes from the pre-translocational (PRE) to the post-translocational (POST) state as the newly formed A-site-bound peptidyl-tRNA and P-site-bound deacylated tRNA move to the P and E sites, respectively. Catalyzes the coordinated movement of the two tRNA molecules, the mRNA and conformational changes in the ribosome (By similarity).</text>
</comment>
<comment type="subcellular location">
    <subcellularLocation>
        <location evidence="1">Cytoplasm</location>
    </subcellularLocation>
</comment>
<comment type="similarity">
    <text evidence="2">Belongs to the TRAFAC class translation factor GTPase superfamily. Classic translation factor GTPase family. EF-G/EF-2 subfamily.</text>
</comment>
<evidence type="ECO:0000250" key="1"/>
<evidence type="ECO:0000305" key="2"/>
<reference key="1">
    <citation type="journal article" date="2000" name="Nature">
        <title>The complete sequence of the mucosal pathogen Ureaplasma urealyticum.</title>
        <authorList>
            <person name="Glass J.I."/>
            <person name="Lefkowitz E.J."/>
            <person name="Glass J.S."/>
            <person name="Heiner C.R."/>
            <person name="Chen E.Y."/>
            <person name="Cassell G.H."/>
        </authorList>
    </citation>
    <scope>NUCLEOTIDE SEQUENCE [LARGE SCALE GENOMIC DNA]</scope>
    <source>
        <strain>ATCC 700970</strain>
    </source>
</reference>
<protein>
    <recommendedName>
        <fullName>Elongation factor G</fullName>
        <shortName>EF-G</shortName>
    </recommendedName>
</protein>
<keyword id="KW-0963">Cytoplasm</keyword>
<keyword id="KW-0251">Elongation factor</keyword>
<keyword id="KW-0342">GTP-binding</keyword>
<keyword id="KW-0547">Nucleotide-binding</keyword>
<keyword id="KW-0648">Protein biosynthesis</keyword>
<keyword id="KW-1185">Reference proteome</keyword>
<feature type="chain" id="PRO_0000091258" description="Elongation factor G">
    <location>
        <begin position="1"/>
        <end position="688"/>
    </location>
</feature>
<feature type="domain" description="tr-type G">
    <location>
        <begin position="6"/>
        <end position="280"/>
    </location>
</feature>
<feature type="binding site" evidence="1">
    <location>
        <begin position="15"/>
        <end position="22"/>
    </location>
    <ligand>
        <name>GTP</name>
        <dbReference type="ChEBI" id="CHEBI:37565"/>
    </ligand>
</feature>
<feature type="binding site" evidence="1">
    <location>
        <begin position="79"/>
        <end position="83"/>
    </location>
    <ligand>
        <name>GTP</name>
        <dbReference type="ChEBI" id="CHEBI:37565"/>
    </ligand>
</feature>
<feature type="binding site" evidence="1">
    <location>
        <begin position="133"/>
        <end position="136"/>
    </location>
    <ligand>
        <name>GTP</name>
        <dbReference type="ChEBI" id="CHEBI:37565"/>
    </ligand>
</feature>
<name>EFG_UREPA</name>
<sequence length="688" mass="76430">MSKELKLFRNFGIMAHIDAGKTTTSERILYHTGKNHKIGETHDGAATMDWMAQEKERGITITSAATYAKWKGHSLNLIDTPGHVDFTVEVERSLRVLDGAVAVLDGQNGVEPQTETVWRQATKYNVPRIVFVNKMDKTGADFYYSIETMKNRLGVKATAIQIPIGAEADFVGSIDLIEMKAYIYDGKADEEYKIEDIPADYLTKAQVMRSQMIDDVAVFDDEVMEKYLSGEELSHEDIKKCIRKGVISTELYPVLCGTAFKNKGVKKLLDAVVDFLPSPIDVPPIKGVDDHGNPIEYHNDPNEPFAALAFKVATDPFVGRLTYIRVYSGKLDKGTYIYNATKDKKERISRLVKMHSNNRDEIDSISAGDICAVIGLKDTTTGDTICDEKKPVILEQMVFAEPVISLSVEPKTKADQEKMSLALSKLAEEDPTFRTYTNEETGQTIIAGMGELHLDVLVDRMRREFNVQVNVGAPQVSYRETFTEVADAEGKYIKQSGGRGQYGHVWIKFEPNHDKGFEFVDNIVGGKVPKEYIKEVENGLIEALTSGPIAGYQTIDVKATIFDGSYHDVDSSGMAYKIAASLAFKEAAKVCKPVLLEPIMSVDVTTPDDYFGTVMGDISKRRGVIEGQEQRGNAQAIKAKVPLSEMFGYATDLRSNTQGRGQYIMQFSHYAQAPKSVTEEVMVARAKK</sequence>
<dbReference type="EMBL" id="AF222894">
    <property type="protein sequence ID" value="AAF30936.1"/>
    <property type="molecule type" value="Genomic_DNA"/>
</dbReference>
<dbReference type="RefSeq" id="WP_006688607.1">
    <property type="nucleotide sequence ID" value="NC_002162.1"/>
</dbReference>
<dbReference type="SMR" id="Q9PPW7"/>
<dbReference type="STRING" id="273119.UU523"/>
<dbReference type="EnsemblBacteria" id="AAF30936">
    <property type="protein sequence ID" value="AAF30936"/>
    <property type="gene ID" value="UU523"/>
</dbReference>
<dbReference type="GeneID" id="29672349"/>
<dbReference type="KEGG" id="uur:UU523"/>
<dbReference type="eggNOG" id="COG0480">
    <property type="taxonomic scope" value="Bacteria"/>
</dbReference>
<dbReference type="HOGENOM" id="CLU_002794_4_1_14"/>
<dbReference type="OrthoDB" id="9804431at2"/>
<dbReference type="Proteomes" id="UP000000423">
    <property type="component" value="Chromosome"/>
</dbReference>
<dbReference type="GO" id="GO:0005737">
    <property type="term" value="C:cytoplasm"/>
    <property type="evidence" value="ECO:0007669"/>
    <property type="project" value="UniProtKB-SubCell"/>
</dbReference>
<dbReference type="GO" id="GO:0005525">
    <property type="term" value="F:GTP binding"/>
    <property type="evidence" value="ECO:0007669"/>
    <property type="project" value="UniProtKB-UniRule"/>
</dbReference>
<dbReference type="GO" id="GO:0003924">
    <property type="term" value="F:GTPase activity"/>
    <property type="evidence" value="ECO:0007669"/>
    <property type="project" value="InterPro"/>
</dbReference>
<dbReference type="GO" id="GO:0003746">
    <property type="term" value="F:translation elongation factor activity"/>
    <property type="evidence" value="ECO:0007669"/>
    <property type="project" value="UniProtKB-UniRule"/>
</dbReference>
<dbReference type="GO" id="GO:0032790">
    <property type="term" value="P:ribosome disassembly"/>
    <property type="evidence" value="ECO:0007669"/>
    <property type="project" value="TreeGrafter"/>
</dbReference>
<dbReference type="CDD" id="cd01886">
    <property type="entry name" value="EF-G"/>
    <property type="match status" value="1"/>
</dbReference>
<dbReference type="CDD" id="cd16262">
    <property type="entry name" value="EFG_III"/>
    <property type="match status" value="1"/>
</dbReference>
<dbReference type="CDD" id="cd01434">
    <property type="entry name" value="EFG_mtEFG1_IV"/>
    <property type="match status" value="1"/>
</dbReference>
<dbReference type="CDD" id="cd03713">
    <property type="entry name" value="EFG_mtEFG_C"/>
    <property type="match status" value="1"/>
</dbReference>
<dbReference type="CDD" id="cd04088">
    <property type="entry name" value="EFG_mtEFG_II"/>
    <property type="match status" value="1"/>
</dbReference>
<dbReference type="FunFam" id="2.40.30.10:FF:000006">
    <property type="entry name" value="Elongation factor G"/>
    <property type="match status" value="1"/>
</dbReference>
<dbReference type="FunFam" id="3.30.230.10:FF:000003">
    <property type="entry name" value="Elongation factor G"/>
    <property type="match status" value="1"/>
</dbReference>
<dbReference type="FunFam" id="3.30.70.240:FF:000001">
    <property type="entry name" value="Elongation factor G"/>
    <property type="match status" value="1"/>
</dbReference>
<dbReference type="FunFam" id="3.30.70.870:FF:000001">
    <property type="entry name" value="Elongation factor G"/>
    <property type="match status" value="1"/>
</dbReference>
<dbReference type="FunFam" id="3.40.50.300:FF:000029">
    <property type="entry name" value="Elongation factor G"/>
    <property type="match status" value="1"/>
</dbReference>
<dbReference type="Gene3D" id="3.30.230.10">
    <property type="match status" value="1"/>
</dbReference>
<dbReference type="Gene3D" id="3.30.70.240">
    <property type="match status" value="1"/>
</dbReference>
<dbReference type="Gene3D" id="3.30.70.870">
    <property type="entry name" value="Elongation Factor G (Translational Gtpase), domain 3"/>
    <property type="match status" value="1"/>
</dbReference>
<dbReference type="Gene3D" id="3.40.50.300">
    <property type="entry name" value="P-loop containing nucleotide triphosphate hydrolases"/>
    <property type="match status" value="1"/>
</dbReference>
<dbReference type="Gene3D" id="2.40.30.10">
    <property type="entry name" value="Translation factors"/>
    <property type="match status" value="1"/>
</dbReference>
<dbReference type="HAMAP" id="MF_00054_B">
    <property type="entry name" value="EF_G_EF_2_B"/>
    <property type="match status" value="1"/>
</dbReference>
<dbReference type="InterPro" id="IPR041095">
    <property type="entry name" value="EFG_II"/>
</dbReference>
<dbReference type="InterPro" id="IPR009022">
    <property type="entry name" value="EFG_III"/>
</dbReference>
<dbReference type="InterPro" id="IPR035647">
    <property type="entry name" value="EFG_III/V"/>
</dbReference>
<dbReference type="InterPro" id="IPR047872">
    <property type="entry name" value="EFG_IV"/>
</dbReference>
<dbReference type="InterPro" id="IPR035649">
    <property type="entry name" value="EFG_V"/>
</dbReference>
<dbReference type="InterPro" id="IPR000640">
    <property type="entry name" value="EFG_V-like"/>
</dbReference>
<dbReference type="InterPro" id="IPR004161">
    <property type="entry name" value="EFTu-like_2"/>
</dbReference>
<dbReference type="InterPro" id="IPR031157">
    <property type="entry name" value="G_TR_CS"/>
</dbReference>
<dbReference type="InterPro" id="IPR027417">
    <property type="entry name" value="P-loop_NTPase"/>
</dbReference>
<dbReference type="InterPro" id="IPR020568">
    <property type="entry name" value="Ribosomal_Su5_D2-typ_SF"/>
</dbReference>
<dbReference type="InterPro" id="IPR014721">
    <property type="entry name" value="Ribsml_uS5_D2-typ_fold_subgr"/>
</dbReference>
<dbReference type="InterPro" id="IPR005225">
    <property type="entry name" value="Small_GTP-bd"/>
</dbReference>
<dbReference type="InterPro" id="IPR000795">
    <property type="entry name" value="T_Tr_GTP-bd_dom"/>
</dbReference>
<dbReference type="InterPro" id="IPR009000">
    <property type="entry name" value="Transl_B-barrel_sf"/>
</dbReference>
<dbReference type="InterPro" id="IPR004540">
    <property type="entry name" value="Transl_elong_EFG/EF2"/>
</dbReference>
<dbReference type="InterPro" id="IPR005517">
    <property type="entry name" value="Transl_elong_EFG/EF2_IV"/>
</dbReference>
<dbReference type="NCBIfam" id="TIGR00484">
    <property type="entry name" value="EF-G"/>
    <property type="match status" value="1"/>
</dbReference>
<dbReference type="NCBIfam" id="NF009381">
    <property type="entry name" value="PRK12740.1-5"/>
    <property type="match status" value="1"/>
</dbReference>
<dbReference type="NCBIfam" id="TIGR00231">
    <property type="entry name" value="small_GTP"/>
    <property type="match status" value="1"/>
</dbReference>
<dbReference type="PANTHER" id="PTHR43261:SF1">
    <property type="entry name" value="RIBOSOME-RELEASING FACTOR 2, MITOCHONDRIAL"/>
    <property type="match status" value="1"/>
</dbReference>
<dbReference type="PANTHER" id="PTHR43261">
    <property type="entry name" value="TRANSLATION ELONGATION FACTOR G-RELATED"/>
    <property type="match status" value="1"/>
</dbReference>
<dbReference type="Pfam" id="PF00679">
    <property type="entry name" value="EFG_C"/>
    <property type="match status" value="1"/>
</dbReference>
<dbReference type="Pfam" id="PF14492">
    <property type="entry name" value="EFG_III"/>
    <property type="match status" value="1"/>
</dbReference>
<dbReference type="Pfam" id="PF03764">
    <property type="entry name" value="EFG_IV"/>
    <property type="match status" value="1"/>
</dbReference>
<dbReference type="Pfam" id="PF00009">
    <property type="entry name" value="GTP_EFTU"/>
    <property type="match status" value="1"/>
</dbReference>
<dbReference type="Pfam" id="PF03144">
    <property type="entry name" value="GTP_EFTU_D2"/>
    <property type="match status" value="1"/>
</dbReference>
<dbReference type="PRINTS" id="PR00315">
    <property type="entry name" value="ELONGATNFCT"/>
</dbReference>
<dbReference type="SMART" id="SM00838">
    <property type="entry name" value="EFG_C"/>
    <property type="match status" value="1"/>
</dbReference>
<dbReference type="SMART" id="SM00889">
    <property type="entry name" value="EFG_IV"/>
    <property type="match status" value="1"/>
</dbReference>
<dbReference type="SUPFAM" id="SSF54980">
    <property type="entry name" value="EF-G C-terminal domain-like"/>
    <property type="match status" value="2"/>
</dbReference>
<dbReference type="SUPFAM" id="SSF52540">
    <property type="entry name" value="P-loop containing nucleoside triphosphate hydrolases"/>
    <property type="match status" value="1"/>
</dbReference>
<dbReference type="SUPFAM" id="SSF54211">
    <property type="entry name" value="Ribosomal protein S5 domain 2-like"/>
    <property type="match status" value="1"/>
</dbReference>
<dbReference type="SUPFAM" id="SSF50447">
    <property type="entry name" value="Translation proteins"/>
    <property type="match status" value="1"/>
</dbReference>
<dbReference type="PROSITE" id="PS00301">
    <property type="entry name" value="G_TR_1"/>
    <property type="match status" value="1"/>
</dbReference>
<dbReference type="PROSITE" id="PS51722">
    <property type="entry name" value="G_TR_2"/>
    <property type="match status" value="1"/>
</dbReference>
<organism>
    <name type="scientific">Ureaplasma parvum serovar 3 (strain ATCC 700970)</name>
    <dbReference type="NCBI Taxonomy" id="273119"/>
    <lineage>
        <taxon>Bacteria</taxon>
        <taxon>Bacillati</taxon>
        <taxon>Mycoplasmatota</taxon>
        <taxon>Mycoplasmoidales</taxon>
        <taxon>Mycoplasmoidaceae</taxon>
        <taxon>Ureaplasma</taxon>
    </lineage>
</organism>